<sequence>MALEKSLVRLLLLVLILLVLGWVQPSLGKESRAKKFQRQHMDSDSSPSSSSTYCNQMMRRRNMTQGRCKPVNTFVHEPLVDVQNVCFQEKVTCKNGQGNCYKSNSSMHITDCRLTNGSRYPNCAYRTSPKERHIIVACEGSPYVPVHFDASVEDST</sequence>
<protein>
    <recommendedName>
        <fullName>Ribonuclease pancreatic</fullName>
        <ecNumber>4.6.1.18</ecNumber>
    </recommendedName>
    <alternativeName>
        <fullName>HP-RNase</fullName>
    </alternativeName>
    <alternativeName>
        <fullName>RIB-1</fullName>
    </alternativeName>
    <alternativeName>
        <fullName>RNase UpI-1</fullName>
    </alternativeName>
    <alternativeName>
        <fullName>Ribonuclease 1</fullName>
        <shortName>RNase 1</shortName>
    </alternativeName>
    <alternativeName>
        <fullName>Ribonuclease A</fullName>
        <shortName>RNase A</shortName>
    </alternativeName>
</protein>
<accession>P07998</accession>
<accession>B2R589</accession>
<accession>D3DS06</accession>
<accession>Q16830</accession>
<accession>Q16869</accession>
<accession>Q1KHR2</accession>
<accession>Q6ICS5</accession>
<accession>Q9UCB4</accession>
<accession>Q9UCB5</accession>
<feature type="signal peptide" evidence="4 6 7 8 9 10">
    <location>
        <begin position="1"/>
        <end position="28"/>
    </location>
</feature>
<feature type="chain" id="PRO_0000030921" description="Ribonuclease pancreatic">
    <location>
        <begin position="29"/>
        <end position="156"/>
    </location>
</feature>
<feature type="region of interest" description="Disordered" evidence="2">
    <location>
        <begin position="33"/>
        <end position="53"/>
    </location>
</feature>
<feature type="compositionally biased region" description="Basic and acidic residues" evidence="2">
    <location>
        <begin position="33"/>
        <end position="43"/>
    </location>
</feature>
<feature type="active site" description="Proton acceptor">
    <location>
        <position position="40"/>
    </location>
</feature>
<feature type="active site" description="Proton donor">
    <location>
        <position position="147"/>
    </location>
</feature>
<feature type="binding site" evidence="1">
    <location>
        <position position="35"/>
    </location>
    <ligand>
        <name>substrate</name>
    </ligand>
</feature>
<feature type="binding site" evidence="1">
    <location>
        <position position="38"/>
    </location>
    <ligand>
        <name>substrate</name>
    </ligand>
</feature>
<feature type="binding site" evidence="1">
    <location>
        <begin position="69"/>
        <end position="73"/>
    </location>
    <ligand>
        <name>substrate</name>
    </ligand>
</feature>
<feature type="binding site" evidence="1">
    <location>
        <position position="94"/>
    </location>
    <ligand>
        <name>substrate</name>
    </ligand>
</feature>
<feature type="binding site" evidence="1">
    <location>
        <position position="113"/>
    </location>
    <ligand>
        <name>substrate</name>
    </ligand>
</feature>
<feature type="glycosylation site" description="N-linked (GlcNAc...) asparagine; partial" evidence="8">
    <location>
        <position position="62"/>
    </location>
</feature>
<feature type="glycosylation site" description="N-linked (GlcNAc...) asparagine" evidence="8">
    <location>
        <position position="104"/>
    </location>
</feature>
<feature type="glycosylation site" description="N-linked (GlcNAc...) asparagine" evidence="8">
    <location>
        <position position="116"/>
    </location>
</feature>
<feature type="disulfide bond">
    <location>
        <begin position="54"/>
        <end position="112"/>
    </location>
</feature>
<feature type="disulfide bond">
    <location>
        <begin position="68"/>
        <end position="123"/>
    </location>
</feature>
<feature type="disulfide bond">
    <location>
        <begin position="86"/>
        <end position="138"/>
    </location>
</feature>
<feature type="disulfide bond">
    <location>
        <begin position="93"/>
        <end position="100"/>
    </location>
</feature>
<feature type="mutagenesis site" description="Substantially decreases binding affinity for RNH1 but maintains high conformational stability; when associated with D-95, A-116, D-117 and D-119." evidence="5">
    <original>R</original>
    <variation>D</variation>
    <location>
        <position position="67"/>
    </location>
</feature>
<feature type="mutagenesis site" description="Substantially decreases binding affinity for RNH1 but maintains high conformational stability; when associated with D-67, A-116, D-117 and D-119." evidence="5">
    <original>N</original>
    <variation>D</variation>
    <location>
        <position position="95"/>
    </location>
</feature>
<feature type="mutagenesis site" description="No effect on inhibition by RNH1." evidence="3">
    <original>NG</original>
    <variation>RS</variation>
    <location>
        <begin position="116"/>
        <end position="117"/>
    </location>
</feature>
<feature type="mutagenesis site" description="Substantially decreases binding affinity for RNH1 but maintains high conformational stability; when associated with D-67, D-95, D-117 and D-119." evidence="5">
    <original>N</original>
    <variation>A</variation>
    <location>
        <position position="116"/>
    </location>
</feature>
<feature type="mutagenesis site" description="Substantially decreases binding affinity for RNH1 but maintains high conformational stability; when associated with D-67, D-95, A-116 and D-119." evidence="5">
    <original>G</original>
    <variation>D</variation>
    <location>
        <position position="117"/>
    </location>
</feature>
<feature type="mutagenesis site" description="Substantially decreases binding affinity for RNH1 but maintains high conformational stability; when associated with D-67, D-95, A-116 and D-117." evidence="5">
    <original>R</original>
    <variation>D</variation>
    <location>
        <position position="119"/>
    </location>
</feature>
<feature type="sequence conflict" description="In Ref. 7; CAA55817." evidence="11" ref="7">
    <original>A</original>
    <variation>G</variation>
    <location>
        <position position="2"/>
    </location>
</feature>
<feature type="sequence conflict" description="In Ref. 8; AAB35096." evidence="11" ref="8">
    <location>
        <position position="4"/>
    </location>
</feature>
<feature type="sequence conflict" description="In Ref. 8; AAB35096." evidence="11" ref="8">
    <original>RLL</original>
    <variation>VLP</variation>
    <location>
        <begin position="9"/>
        <end position="11"/>
    </location>
</feature>
<feature type="sequence conflict" description="In Ref. 8; AAB35096." evidence="11" ref="8">
    <original>ILLVLGW</original>
    <variation>VLLLVR</variation>
    <location>
        <begin position="16"/>
        <end position="22"/>
    </location>
</feature>
<feature type="sequence conflict" description="In Ref. 4; CAG29314." evidence="11" ref="4">
    <original>R</original>
    <variation>L</variation>
    <location>
        <position position="67"/>
    </location>
</feature>
<feature type="sequence conflict" description="In Ref. 7; CAA55817." evidence="11" ref="7">
    <original>S</original>
    <variation>T</variation>
    <location>
        <position position="151"/>
    </location>
</feature>
<feature type="helix" evidence="13">
    <location>
        <begin position="32"/>
        <end position="40"/>
    </location>
</feature>
<feature type="turn" evidence="12">
    <location>
        <begin position="47"/>
        <end position="50"/>
    </location>
</feature>
<feature type="helix" evidence="13">
    <location>
        <begin position="53"/>
        <end position="60"/>
    </location>
</feature>
<feature type="turn" evidence="14">
    <location>
        <begin position="61"/>
        <end position="64"/>
    </location>
</feature>
<feature type="strand" evidence="13">
    <location>
        <begin position="65"/>
        <end position="67"/>
    </location>
</feature>
<feature type="strand" evidence="13">
    <location>
        <begin position="70"/>
        <end position="75"/>
    </location>
</feature>
<feature type="helix" evidence="13">
    <location>
        <begin position="79"/>
        <end position="83"/>
    </location>
</feature>
<feature type="helix" evidence="13">
    <location>
        <begin position="84"/>
        <end position="87"/>
    </location>
</feature>
<feature type="strand" evidence="13">
    <location>
        <begin position="88"/>
        <end position="92"/>
    </location>
</feature>
<feature type="strand" evidence="13">
    <location>
        <begin position="96"/>
        <end position="102"/>
    </location>
</feature>
<feature type="strand" evidence="13">
    <location>
        <begin position="107"/>
        <end position="114"/>
    </location>
</feature>
<feature type="strand" evidence="15">
    <location>
        <begin position="120"/>
        <end position="122"/>
    </location>
</feature>
<feature type="strand" evidence="13">
    <location>
        <begin position="125"/>
        <end position="139"/>
    </location>
</feature>
<feature type="turn" evidence="13">
    <location>
        <begin position="140"/>
        <end position="143"/>
    </location>
</feature>
<feature type="strand" evidence="13">
    <location>
        <begin position="144"/>
        <end position="152"/>
    </location>
</feature>
<keyword id="KW-0002">3D-structure</keyword>
<keyword id="KW-0903">Direct protein sequencing</keyword>
<keyword id="KW-1015">Disulfide bond</keyword>
<keyword id="KW-0255">Endonuclease</keyword>
<keyword id="KW-0325">Glycoprotein</keyword>
<keyword id="KW-0378">Hydrolase</keyword>
<keyword id="KW-0456">Lyase</keyword>
<keyword id="KW-0540">Nuclease</keyword>
<keyword id="KW-1267">Proteomics identification</keyword>
<keyword id="KW-1185">Reference proteome</keyword>
<keyword id="KW-0964">Secreted</keyword>
<keyword id="KW-0732">Signal</keyword>
<comment type="function">
    <text evidence="5">Endonuclease that catalyzes the cleavage of RNA on the 3' side of pyrimidine nucleotides. Acts on single-stranded and double-stranded RNA.</text>
</comment>
<comment type="catalytic activity">
    <reaction>
        <text>an [RNA] containing cytidine + H2O = an [RNA]-3'-cytidine-3'-phosphate + a 5'-hydroxy-ribonucleotide-3'-[RNA].</text>
        <dbReference type="EC" id="4.6.1.18"/>
    </reaction>
</comment>
<comment type="catalytic activity">
    <reaction>
        <text>an [RNA] containing uridine + H2O = an [RNA]-3'-uridine-3'-phosphate + a 5'-hydroxy-ribonucleotide-3'-[RNA].</text>
        <dbReference type="EC" id="4.6.1.18"/>
    </reaction>
</comment>
<comment type="subunit">
    <text evidence="5">Monomer. Interacts with and forms tight 1:1 complexes with RNH1. Dimerization of two such complexes may occur. Interaction with RNH1 inhibits this protein.</text>
</comment>
<comment type="interaction">
    <interactant intactId="EBI-2823523">
        <id>P07998</id>
    </interactant>
    <interactant intactId="EBI-1237106">
        <id>P13489</id>
        <label>RNH1</label>
    </interactant>
    <organismsDiffer>false</organismsDiffer>
    <experiments>10</experiments>
</comment>
<comment type="interaction">
    <interactant intactId="EBI-2823523">
        <id>P07998</id>
    </interactant>
    <interactant intactId="EBI-2813981">
        <id>Q9C029</id>
        <label>TRIM7</label>
    </interactant>
    <organismsDiffer>false</organismsDiffer>
    <experiments>3</experiments>
</comment>
<comment type="subcellular location">
    <subcellularLocation>
        <location>Secreted</location>
    </subcellularLocation>
</comment>
<comment type="tissue specificity">
    <text>Pancreas and other tissues and body fluids (indicating it may have other physiological functions besides its role in digestion).</text>
</comment>
<comment type="PTM">
    <text evidence="8">N-linked glycans are of complex type.</text>
</comment>
<comment type="similarity">
    <text evidence="11">Belongs to the pancreatic ribonuclease family.</text>
</comment>
<proteinExistence type="evidence at protein level"/>
<organism>
    <name type="scientific">Homo sapiens</name>
    <name type="common">Human</name>
    <dbReference type="NCBI Taxonomy" id="9606"/>
    <lineage>
        <taxon>Eukaryota</taxon>
        <taxon>Metazoa</taxon>
        <taxon>Chordata</taxon>
        <taxon>Craniata</taxon>
        <taxon>Vertebrata</taxon>
        <taxon>Euteleostomi</taxon>
        <taxon>Mammalia</taxon>
        <taxon>Eutheria</taxon>
        <taxon>Euarchontoglires</taxon>
        <taxon>Primates</taxon>
        <taxon>Haplorrhini</taxon>
        <taxon>Catarrhini</taxon>
        <taxon>Hominidae</taxon>
        <taxon>Homo</taxon>
    </lineage>
</organism>
<reference key="1">
    <citation type="journal article" date="1994" name="Biochim. Biophys. Acta">
        <title>Nucleotide sequence encoding human pancreatic ribonuclease.</title>
        <authorList>
            <person name="Seno M."/>
            <person name="Fatami J.I."/>
            <person name="Kosaka M."/>
            <person name="Seno S."/>
            <person name="Yamada H."/>
        </authorList>
    </citation>
    <scope>NUCLEOTIDE SEQUENCE [MRNA]</scope>
    <source>
        <tissue>Pancreas</tissue>
    </source>
</reference>
<reference key="2">
    <citation type="journal article" date="2006" name="Mol. Biol. Evol.">
        <title>Duplication and divergence of two distinct pancreatic ribonuclease genes in leaf-eating African and Asian colobine monkeys.</title>
        <authorList>
            <person name="Schienman J.E."/>
            <person name="Holt R.A."/>
            <person name="Auerbach M.R."/>
            <person name="Stewart C.B."/>
        </authorList>
    </citation>
    <scope>NUCLEOTIDE SEQUENCE [GENOMIC DNA]</scope>
</reference>
<reference key="3">
    <citation type="journal article" date="2004" name="Nat. Genet.">
        <title>Complete sequencing and characterization of 21,243 full-length human cDNAs.</title>
        <authorList>
            <person name="Ota T."/>
            <person name="Suzuki Y."/>
            <person name="Nishikawa T."/>
            <person name="Otsuki T."/>
            <person name="Sugiyama T."/>
            <person name="Irie R."/>
            <person name="Wakamatsu A."/>
            <person name="Hayashi K."/>
            <person name="Sato H."/>
            <person name="Nagai K."/>
            <person name="Kimura K."/>
            <person name="Makita H."/>
            <person name="Sekine M."/>
            <person name="Obayashi M."/>
            <person name="Nishi T."/>
            <person name="Shibahara T."/>
            <person name="Tanaka T."/>
            <person name="Ishii S."/>
            <person name="Yamamoto J."/>
            <person name="Saito K."/>
            <person name="Kawai Y."/>
            <person name="Isono Y."/>
            <person name="Nakamura Y."/>
            <person name="Nagahari K."/>
            <person name="Murakami K."/>
            <person name="Yasuda T."/>
            <person name="Iwayanagi T."/>
            <person name="Wagatsuma M."/>
            <person name="Shiratori A."/>
            <person name="Sudo H."/>
            <person name="Hosoiri T."/>
            <person name="Kaku Y."/>
            <person name="Kodaira H."/>
            <person name="Kondo H."/>
            <person name="Sugawara M."/>
            <person name="Takahashi M."/>
            <person name="Kanda K."/>
            <person name="Yokoi T."/>
            <person name="Furuya T."/>
            <person name="Kikkawa E."/>
            <person name="Omura Y."/>
            <person name="Abe K."/>
            <person name="Kamihara K."/>
            <person name="Katsuta N."/>
            <person name="Sato K."/>
            <person name="Tanikawa M."/>
            <person name="Yamazaki M."/>
            <person name="Ninomiya K."/>
            <person name="Ishibashi T."/>
            <person name="Yamashita H."/>
            <person name="Murakawa K."/>
            <person name="Fujimori K."/>
            <person name="Tanai H."/>
            <person name="Kimata M."/>
            <person name="Watanabe M."/>
            <person name="Hiraoka S."/>
            <person name="Chiba Y."/>
            <person name="Ishida S."/>
            <person name="Ono Y."/>
            <person name="Takiguchi S."/>
            <person name="Watanabe S."/>
            <person name="Yosida M."/>
            <person name="Hotuta T."/>
            <person name="Kusano J."/>
            <person name="Kanehori K."/>
            <person name="Takahashi-Fujii A."/>
            <person name="Hara H."/>
            <person name="Tanase T.-O."/>
            <person name="Nomura Y."/>
            <person name="Togiya S."/>
            <person name="Komai F."/>
            <person name="Hara R."/>
            <person name="Takeuchi K."/>
            <person name="Arita M."/>
            <person name="Imose N."/>
            <person name="Musashino K."/>
            <person name="Yuuki H."/>
            <person name="Oshima A."/>
            <person name="Sasaki N."/>
            <person name="Aotsuka S."/>
            <person name="Yoshikawa Y."/>
            <person name="Matsunawa H."/>
            <person name="Ichihara T."/>
            <person name="Shiohata N."/>
            <person name="Sano S."/>
            <person name="Moriya S."/>
            <person name="Momiyama H."/>
            <person name="Satoh N."/>
            <person name="Takami S."/>
            <person name="Terashima Y."/>
            <person name="Suzuki O."/>
            <person name="Nakagawa S."/>
            <person name="Senoh A."/>
            <person name="Mizoguchi H."/>
            <person name="Goto Y."/>
            <person name="Shimizu F."/>
            <person name="Wakebe H."/>
            <person name="Hishigaki H."/>
            <person name="Watanabe T."/>
            <person name="Sugiyama A."/>
            <person name="Takemoto M."/>
            <person name="Kawakami B."/>
            <person name="Yamazaki M."/>
            <person name="Watanabe K."/>
            <person name="Kumagai A."/>
            <person name="Itakura S."/>
            <person name="Fukuzumi Y."/>
            <person name="Fujimori Y."/>
            <person name="Komiyama M."/>
            <person name="Tashiro H."/>
            <person name="Tanigami A."/>
            <person name="Fujiwara T."/>
            <person name="Ono T."/>
            <person name="Yamada K."/>
            <person name="Fujii Y."/>
            <person name="Ozaki K."/>
            <person name="Hirao M."/>
            <person name="Ohmori Y."/>
            <person name="Kawabata A."/>
            <person name="Hikiji T."/>
            <person name="Kobatake N."/>
            <person name="Inagaki H."/>
            <person name="Ikema Y."/>
            <person name="Okamoto S."/>
            <person name="Okitani R."/>
            <person name="Kawakami T."/>
            <person name="Noguchi S."/>
            <person name="Itoh T."/>
            <person name="Shigeta K."/>
            <person name="Senba T."/>
            <person name="Matsumura K."/>
            <person name="Nakajima Y."/>
            <person name="Mizuno T."/>
            <person name="Morinaga M."/>
            <person name="Sasaki M."/>
            <person name="Togashi T."/>
            <person name="Oyama M."/>
            <person name="Hata H."/>
            <person name="Watanabe M."/>
            <person name="Komatsu T."/>
            <person name="Mizushima-Sugano J."/>
            <person name="Satoh T."/>
            <person name="Shirai Y."/>
            <person name="Takahashi Y."/>
            <person name="Nakagawa K."/>
            <person name="Okumura K."/>
            <person name="Nagase T."/>
            <person name="Nomura N."/>
            <person name="Kikuchi H."/>
            <person name="Masuho Y."/>
            <person name="Yamashita R."/>
            <person name="Nakai K."/>
            <person name="Yada T."/>
            <person name="Nakamura Y."/>
            <person name="Ohara O."/>
            <person name="Isogai T."/>
            <person name="Sugano S."/>
        </authorList>
    </citation>
    <scope>NUCLEOTIDE SEQUENCE [LARGE SCALE MRNA]</scope>
    <source>
        <tissue>Testis</tissue>
    </source>
</reference>
<reference key="4">
    <citation type="submission" date="2004-05" db="EMBL/GenBank/DDBJ databases">
        <title>Cloning of human full open reading frames in Gateway(TM) system entry vector (pDONR201).</title>
        <authorList>
            <person name="Ebert L."/>
            <person name="Schick M."/>
            <person name="Neubert P."/>
            <person name="Schatten R."/>
            <person name="Henze S."/>
            <person name="Korn B."/>
        </authorList>
    </citation>
    <scope>NUCLEOTIDE SEQUENCE [MRNA]</scope>
</reference>
<reference key="5">
    <citation type="submission" date="2005-09" db="EMBL/GenBank/DDBJ databases">
        <authorList>
            <person name="Mural R.J."/>
            <person name="Istrail S."/>
            <person name="Sutton G.G."/>
            <person name="Florea L."/>
            <person name="Halpern A.L."/>
            <person name="Mobarry C.M."/>
            <person name="Lippert R."/>
            <person name="Walenz B."/>
            <person name="Shatkay H."/>
            <person name="Dew I."/>
            <person name="Miller J.R."/>
            <person name="Flanigan M.J."/>
            <person name="Edwards N.J."/>
            <person name="Bolanos R."/>
            <person name="Fasulo D."/>
            <person name="Halldorsson B.V."/>
            <person name="Hannenhalli S."/>
            <person name="Turner R."/>
            <person name="Yooseph S."/>
            <person name="Lu F."/>
            <person name="Nusskern D.R."/>
            <person name="Shue B.C."/>
            <person name="Zheng X.H."/>
            <person name="Zhong F."/>
            <person name="Delcher A.L."/>
            <person name="Huson D.H."/>
            <person name="Kravitz S.A."/>
            <person name="Mouchard L."/>
            <person name="Reinert K."/>
            <person name="Remington K.A."/>
            <person name="Clark A.G."/>
            <person name="Waterman M.S."/>
            <person name="Eichler E.E."/>
            <person name="Adams M.D."/>
            <person name="Hunkapiller M.W."/>
            <person name="Myers E.W."/>
            <person name="Venter J.C."/>
        </authorList>
    </citation>
    <scope>NUCLEOTIDE SEQUENCE [LARGE SCALE GENOMIC DNA]</scope>
</reference>
<reference key="6">
    <citation type="journal article" date="2004" name="Genome Res.">
        <title>The status, quality, and expansion of the NIH full-length cDNA project: the Mammalian Gene Collection (MGC).</title>
        <authorList>
            <consortium name="The MGC Project Team"/>
        </authorList>
    </citation>
    <scope>NUCLEOTIDE SEQUENCE [LARGE SCALE MRNA]</scope>
    <source>
        <tissue>Pancreas</tissue>
        <tissue>Prostate</tissue>
    </source>
</reference>
<reference key="7">
    <citation type="journal article" date="1995" name="Bioorg. Khim.">
        <title>Primary structure of the coding part of the gene for human pancreatic ribonuclease and its chromosomal location.</title>
        <authorList>
            <person name="Kochetov A.V."/>
            <person name="Lukasheva V.V."/>
            <person name="Filipenko M.L."/>
            <person name="Mertvetsov N.P."/>
            <person name="Rivkin M.I."/>
        </authorList>
    </citation>
    <scope>NUCLEOTIDE SEQUENCE [GENOMIC DNA] OF 1-152</scope>
    <source>
        <tissue>Placenta</tissue>
    </source>
</reference>
<reference key="8">
    <citation type="journal article" date="1995" name="FEBS Lett.">
        <title>Expression in mammalian cells, purification and characterization of recombinant human pancreatic ribonuclease.</title>
        <authorList>
            <person name="Russo N."/>
            <person name="de Nigris M."/>
            <person name="Ciardiello A."/>
            <person name="Di Donato A."/>
            <person name="D'Alessio G."/>
        </authorList>
    </citation>
    <scope>NUCLEOTIDE SEQUENCE [MRNA] OF 1-155</scope>
</reference>
<reference key="9">
    <citation type="journal article" date="1992" name="Nucleic Acids Res.">
        <title>The DNA sequences of the human and hamster secretory ribonucleases determined with the polymerase chain reaction (PCR).</title>
        <authorList>
            <person name="Haugg M."/>
            <person name="Schein C.H."/>
        </authorList>
    </citation>
    <scope>NUCLEOTIDE SEQUENCE [GENOMIC DNA] OF 23-149</scope>
    <source>
        <tissue>Placenta</tissue>
    </source>
</reference>
<reference key="10">
    <citation type="journal article" date="1984" name="Anal. Biochem.">
        <title>The amino acid sequence of human pancreatic ribonuclease.</title>
        <authorList>
            <person name="Beintema J.J."/>
            <person name="Wietzes P."/>
            <person name="Weickmann J.L."/>
            <person name="Glitz D.G."/>
        </authorList>
    </citation>
    <scope>PROTEIN SEQUENCE OF 29-156</scope>
    <source>
        <tissue>Pancreas</tissue>
    </source>
</reference>
<reference key="11">
    <citation type="journal article" date="1988" name="Biochem. J.">
        <title>Differences in glycosylation pattern of human secretory ribonucleases.</title>
        <authorList>
            <person name="Beintema J.J."/>
            <person name="Blank A."/>
            <person name="Schieven G.L."/>
            <person name="Dekker C.A."/>
            <person name="Sorrentino S."/>
            <person name="Libonati M."/>
        </authorList>
    </citation>
    <scope>PROTEIN SEQUENCE OF 29-156</scope>
    <scope>GLYCOSYLATION AT ASN-62; ASN-104 AND ASN-116</scope>
</reference>
<reference key="12">
    <citation type="journal article" date="1990" name="Arch. Biochem. Biophys.">
        <title>Purification and characterization of three ribonucleases from human kidney: comparison with urine ribonucleases.</title>
        <authorList>
            <person name="Mizuta K."/>
            <person name="Awazu S."/>
            <person name="Yasuda T."/>
            <person name="Kishi K."/>
        </authorList>
    </citation>
    <scope>PROTEIN SEQUENCE OF 29-47</scope>
</reference>
<reference key="13">
    <citation type="journal article" date="1991" name="Chem. Pharm. Bull.">
        <title>A putative mouse oocyte maturation inhibitory protein from urine of pregnant women: N-terminal sequence homology with human nonsecretory ribonuclease.</title>
        <authorList>
            <person name="Sakakibara R."/>
            <person name="Hashida K."/>
            <person name="Tominaga N."/>
            <person name="Sakai K."/>
            <person name="Ishiguro M."/>
            <person name="Imamura S."/>
            <person name="Ohmatsu F."/>
            <person name="Sato E."/>
        </authorList>
    </citation>
    <scope>PROTEIN SEQUENCE OF 29-43</scope>
</reference>
<reference key="14">
    <citation type="journal article" date="1992" name="J. Biochem.">
        <title>Characterization of a unique nonsecretory ribonuclease from urine of pregnant women.</title>
        <authorList>
            <person name="Sakakibara R."/>
            <person name="Hashida K."/>
            <person name="Kitahara T."/>
            <person name="Ishiguro M."/>
        </authorList>
    </citation>
    <scope>PROTEIN SEQUENCE OF 29-48</scope>
    <source>
        <tissue>Urine</tissue>
    </source>
</reference>
<reference key="15">
    <citation type="journal article" date="1993" name="Biochem. J.">
        <title>Two distinct secretory ribonucleases from human cerebrum: purification, characterization and relationships to other ribonucleases.</title>
        <authorList>
            <person name="Yasuda T."/>
            <person name="Nadano D."/>
            <person name="Takeshita H."/>
            <person name="Kishi K."/>
        </authorList>
    </citation>
    <scope>PROTEIN SEQUENCE OF 29-49</scope>
</reference>
<reference key="16">
    <citation type="journal article" date="2000" name="J. Mol. Biol.">
        <title>Three-dimensional structure of a human pancreatic ribonuclease variant, a step forward in the design of cytotoxic ribonucleases.</title>
        <authorList>
            <person name="Pous J."/>
            <person name="Canals A."/>
            <person name="Terzyan S.S."/>
            <person name="Guasch A."/>
            <person name="Benito A."/>
            <person name="Ribo M."/>
            <person name="Vilanova M."/>
            <person name="Coll M."/>
        </authorList>
    </citation>
    <scope>X-RAY CRYSTALLOGRAPHY (1.65 ANGSTROMS) OF 29-156</scope>
    <scope>MUTAGENESIS OF 116-ASN-GLY-117</scope>
</reference>
<reference key="17">
    <citation type="journal article" date="2001" name="Acta Crystallogr. D">
        <title>Three-dimensional structure of human RNase 1 delta N7 at 1.9 A resolution.</title>
        <authorList>
            <person name="Pous J."/>
            <person name="Mallorqui-Fernandez G."/>
            <person name="Peracaula R."/>
            <person name="Terzyan S.S."/>
            <person name="Futami J."/>
            <person name="Tada H."/>
            <person name="Yamada H."/>
            <person name="Seno M."/>
            <person name="de Llorens R."/>
            <person name="Gomis-Rueth F.-X."/>
            <person name="Coll M."/>
        </authorList>
    </citation>
    <scope>X-RAY CRYSTALLOGRAPHY (1.9 ANGSTROMS) OF 29-156</scope>
</reference>
<reference key="18">
    <citation type="journal article" date="2001" name="Structure">
        <title>The structure of an engineered domain-swapped ribonuclease dimer and its implications for the evolution of proteins toward oligomerization.</title>
        <authorList>
            <person name="Canals A."/>
            <person name="Pous J."/>
            <person name="Guasch A."/>
            <person name="Benito A."/>
            <person name="Ribo M."/>
            <person name="Vilanova M."/>
            <person name="Coll M."/>
        </authorList>
    </citation>
    <scope>X-RAY CRYSTALLOGRAPHY (2.0 ANGSTROMS) OF 29-156</scope>
    <scope>DISULFIDE BONDS</scope>
</reference>
<reference key="19">
    <citation type="journal article" date="2007" name="J. Mol. Biol.">
        <title>Inhibition of human pancreatic ribonuclease by the human ribonuclease inhibitor protein.</title>
        <authorList>
            <person name="Johnson R.J."/>
            <person name="McCoy J.G."/>
            <person name="Bingman C.A."/>
            <person name="Phillips G.N. Jr."/>
            <person name="Raines R.T."/>
        </authorList>
    </citation>
    <scope>X-RAY CRYSTALLOGRAPHY (1.95 ANGSTROMS) OF 29-156 IN COMPLEX WITH RNH1</scope>
    <scope>FUNCTION</scope>
    <scope>SUBUNIT</scope>
    <scope>INTERACTION WITH RNH1</scope>
    <scope>DISULFIDE BONDS</scope>
    <scope>MUTAGENESIS OF ARG-67; ASN-95; ASN-116; GLY-117 AND ARG-119</scope>
</reference>
<reference key="20">
    <citation type="journal article" date="2007" name="Protein Sci.">
        <title>'Crystal lattice engineering,' an approach to engineer protein crystal contacts by creating intermolecular symmetry: crystallization and structure determination of a mutant human RNase 1 with a hydrophobic interface of leucines.</title>
        <authorList>
            <person name="Yamada H."/>
            <person name="Tamada T."/>
            <person name="Kosaka M."/>
            <person name="Miyata K."/>
            <person name="Fujiki S."/>
            <person name="Tano M."/>
            <person name="Moriya M."/>
            <person name="Yamanishi M."/>
            <person name="Honjo E."/>
            <person name="Tada H."/>
            <person name="Ino T."/>
            <person name="Yamaguchi H."/>
            <person name="Futami J."/>
            <person name="Seno M."/>
            <person name="Nomoto T."/>
            <person name="Hirata T."/>
            <person name="Yoshimura M."/>
            <person name="Kuroki R."/>
        </authorList>
    </citation>
    <scope>X-RAY CRYSTALLOGRAPHY (1.6 ANGSTROMS) OF 29-156</scope>
    <scope>DISULFIDE BONDS</scope>
</reference>
<evidence type="ECO:0000250" key="1"/>
<evidence type="ECO:0000256" key="2">
    <source>
        <dbReference type="SAM" id="MobiDB-lite"/>
    </source>
</evidence>
<evidence type="ECO:0000269" key="3">
    <source>
    </source>
</evidence>
<evidence type="ECO:0000269" key="4">
    <source>
    </source>
</evidence>
<evidence type="ECO:0000269" key="5">
    <source>
    </source>
</evidence>
<evidence type="ECO:0000269" key="6">
    <source>
    </source>
</evidence>
<evidence type="ECO:0000269" key="7">
    <source>
    </source>
</evidence>
<evidence type="ECO:0000269" key="8">
    <source>
    </source>
</evidence>
<evidence type="ECO:0000269" key="9">
    <source>
    </source>
</evidence>
<evidence type="ECO:0000269" key="10">
    <source>
    </source>
</evidence>
<evidence type="ECO:0000305" key="11"/>
<evidence type="ECO:0007829" key="12">
    <source>
        <dbReference type="PDB" id="1H8X"/>
    </source>
</evidence>
<evidence type="ECO:0007829" key="13">
    <source>
        <dbReference type="PDB" id="2E0J"/>
    </source>
</evidence>
<evidence type="ECO:0007829" key="14">
    <source>
        <dbReference type="PDB" id="2E0L"/>
    </source>
</evidence>
<evidence type="ECO:0007829" key="15">
    <source>
        <dbReference type="PDB" id="3F8G"/>
    </source>
</evidence>
<dbReference type="EC" id="4.6.1.18"/>
<dbReference type="EMBL" id="D26129">
    <property type="protein sequence ID" value="BAA05124.1"/>
    <property type="molecule type" value="mRNA"/>
</dbReference>
<dbReference type="EMBL" id="DQ494867">
    <property type="protein sequence ID" value="ABF00144.1"/>
    <property type="molecule type" value="Genomic_DNA"/>
</dbReference>
<dbReference type="EMBL" id="AK312100">
    <property type="protein sequence ID" value="BAG35036.1"/>
    <property type="molecule type" value="mRNA"/>
</dbReference>
<dbReference type="EMBL" id="CR450318">
    <property type="protein sequence ID" value="CAG29314.1"/>
    <property type="molecule type" value="mRNA"/>
</dbReference>
<dbReference type="EMBL" id="CH471078">
    <property type="protein sequence ID" value="EAW66437.1"/>
    <property type="molecule type" value="Genomic_DNA"/>
</dbReference>
<dbReference type="EMBL" id="CH471078">
    <property type="protein sequence ID" value="EAW66438.1"/>
    <property type="molecule type" value="Genomic_DNA"/>
</dbReference>
<dbReference type="EMBL" id="BC005324">
    <property type="protein sequence ID" value="AAH05324.1"/>
    <property type="molecule type" value="mRNA"/>
</dbReference>
<dbReference type="EMBL" id="BC022882">
    <property type="protein sequence ID" value="AAH22882.1"/>
    <property type="molecule type" value="mRNA"/>
</dbReference>
<dbReference type="EMBL" id="X79235">
    <property type="protein sequence ID" value="CAA55817.1"/>
    <property type="molecule type" value="Genomic_DNA"/>
</dbReference>
<dbReference type="EMBL" id="S79281">
    <property type="protein sequence ID" value="AAB35096.1"/>
    <property type="molecule type" value="mRNA"/>
</dbReference>
<dbReference type="EMBL" id="X62946">
    <property type="protein sequence ID" value="CAA44718.1"/>
    <property type="molecule type" value="Genomic_DNA"/>
</dbReference>
<dbReference type="CCDS" id="CCDS9559.1"/>
<dbReference type="PIR" id="I53530">
    <property type="entry name" value="I53530"/>
</dbReference>
<dbReference type="PIR" id="S45003">
    <property type="entry name" value="NRHU1"/>
</dbReference>
<dbReference type="RefSeq" id="NP_002924.1">
    <property type="nucleotide sequence ID" value="NM_002933.5"/>
</dbReference>
<dbReference type="RefSeq" id="NP_937875.1">
    <property type="nucleotide sequence ID" value="NM_198232.3"/>
</dbReference>
<dbReference type="RefSeq" id="NP_937877.1">
    <property type="nucleotide sequence ID" value="NM_198234.3"/>
</dbReference>
<dbReference type="RefSeq" id="NP_937878.1">
    <property type="nucleotide sequence ID" value="NM_198235.3"/>
</dbReference>
<dbReference type="PDB" id="1DZA">
    <property type="method" value="X-ray"/>
    <property type="resolution" value="1.65 A"/>
    <property type="chains" value="A/B=28-156"/>
</dbReference>
<dbReference type="PDB" id="1E21">
    <property type="method" value="X-ray"/>
    <property type="resolution" value="1.90 A"/>
    <property type="chains" value="A=29-156"/>
</dbReference>
<dbReference type="PDB" id="1H8X">
    <property type="method" value="X-ray"/>
    <property type="resolution" value="2.00 A"/>
    <property type="chains" value="A/B=29-156"/>
</dbReference>
<dbReference type="PDB" id="1Z7X">
    <property type="method" value="X-ray"/>
    <property type="resolution" value="1.95 A"/>
    <property type="chains" value="X/Z=29-156"/>
</dbReference>
<dbReference type="PDB" id="2E0J">
    <property type="method" value="X-ray"/>
    <property type="resolution" value="1.60 A"/>
    <property type="chains" value="A/B=29-156"/>
</dbReference>
<dbReference type="PDB" id="2E0L">
    <property type="method" value="X-ray"/>
    <property type="resolution" value="1.60 A"/>
    <property type="chains" value="A/B=29-156"/>
</dbReference>
<dbReference type="PDB" id="2E0M">
    <property type="method" value="X-ray"/>
    <property type="resolution" value="1.70 A"/>
    <property type="chains" value="A/B=29-156"/>
</dbReference>
<dbReference type="PDB" id="2E0O">
    <property type="method" value="X-ray"/>
    <property type="resolution" value="2.00 A"/>
    <property type="chains" value="A/B=29-156"/>
</dbReference>
<dbReference type="PDB" id="2K11">
    <property type="method" value="NMR"/>
    <property type="chains" value="A=29-155"/>
</dbReference>
<dbReference type="PDB" id="2Q4G">
    <property type="method" value="X-ray"/>
    <property type="resolution" value="1.95 A"/>
    <property type="chains" value="X/Z=29-156"/>
</dbReference>
<dbReference type="PDB" id="3F8G">
    <property type="method" value="X-ray"/>
    <property type="resolution" value="2.60 A"/>
    <property type="chains" value="A/B=29-153"/>
</dbReference>
<dbReference type="PDB" id="4KXH">
    <property type="method" value="X-ray"/>
    <property type="resolution" value="2.70 A"/>
    <property type="chains" value="A/B/C/D=29-156"/>
</dbReference>
<dbReference type="PDBsum" id="1DZA"/>
<dbReference type="PDBsum" id="1E21"/>
<dbReference type="PDBsum" id="1H8X"/>
<dbReference type="PDBsum" id="1Z7X"/>
<dbReference type="PDBsum" id="2E0J"/>
<dbReference type="PDBsum" id="2E0L"/>
<dbReference type="PDBsum" id="2E0M"/>
<dbReference type="PDBsum" id="2E0O"/>
<dbReference type="PDBsum" id="2K11"/>
<dbReference type="PDBsum" id="2Q4G"/>
<dbReference type="PDBsum" id="3F8G"/>
<dbReference type="PDBsum" id="4KXH"/>
<dbReference type="BMRB" id="P07998"/>
<dbReference type="SMR" id="P07998"/>
<dbReference type="BioGRID" id="111964">
    <property type="interactions" value="12"/>
</dbReference>
<dbReference type="FunCoup" id="P07998">
    <property type="interactions" value="73"/>
</dbReference>
<dbReference type="IntAct" id="P07998">
    <property type="interactions" value="13"/>
</dbReference>
<dbReference type="MINT" id="P07998"/>
<dbReference type="STRING" id="9606.ENSP00000381057"/>
<dbReference type="BindingDB" id="P07998"/>
<dbReference type="ChEMBL" id="CHEMBL5425"/>
<dbReference type="DrugBank" id="DB08661">
    <property type="generic name" value="1-(2,5-dideoxy-5-pyrrolidin-1-yl-beta-L-erythro-pentofuranosyl)-5-methylpyrimidine-2,4(1H,3H)-dione"/>
</dbReference>
<dbReference type="DrugBank" id="DB03765">
    <property type="generic name" value="2'-cytidylic acid"/>
</dbReference>
<dbReference type="DrugBank" id="DB02573">
    <property type="generic name" value="2'-deoxycytidine-2'-deoxyadenosine-3',5'-monophosphate"/>
</dbReference>
<dbReference type="DrugBank" id="DB03448">
    <property type="generic name" value="2'-Deoxyuridine 3'-Monophosphate"/>
</dbReference>
<dbReference type="DrugBank" id="DB03155">
    <property type="generic name" value="2'-fluoro-2'-deoxyuridine 3'-monophosphate"/>
</dbReference>
<dbReference type="DrugBank" id="DB02363">
    <property type="generic name" value="2'-Monophosphoadenosine-5'-Diphosphate"/>
</dbReference>
<dbReference type="DrugBank" id="DB01842">
    <property type="generic name" value="3'-Phosphate-Adenosine-5'-Diphosphate"/>
</dbReference>
<dbReference type="DrugBank" id="DB02714">
    <property type="generic name" value="3'-Uridinemonophosphate"/>
</dbReference>
<dbReference type="DrugBank" id="DB08596">
    <property type="generic name" value="5'-deoxy-5'-piperidin-1-ylthymidine"/>
</dbReference>
<dbReference type="DrugBank" id="DB03792">
    <property type="generic name" value="5-Aminouracil"/>
</dbReference>
<dbReference type="DrugBank" id="DB01812">
    <property type="generic name" value="Adenosine 3',5'-diphosphate"/>
</dbReference>
<dbReference type="DrugBank" id="DB02098">
    <property type="generic name" value="Adenosine-2'-5'-Diphosphate"/>
</dbReference>
<dbReference type="DrugBank" id="DB03186">
    <property type="generic name" value="Adenylate-3'-phosphate-[[2'-deoxy-uridine-5'-phosphate]-3'-phosphate]"/>
</dbReference>
<dbReference type="DrugBank" id="DB02805">
    <property type="generic name" value="Arabinouridine 3'-phosphate"/>
</dbReference>
<dbReference type="DrugBank" id="DB00128">
    <property type="generic name" value="Aspartic acid"/>
</dbReference>
<dbReference type="DrugBank" id="DB04272">
    <property type="generic name" value="Citric acid"/>
</dbReference>
<dbReference type="DrugBank" id="DB02987">
    <property type="generic name" value="Cysteine-S-acetamide"/>
</dbReference>
<dbReference type="DrugBank" id="DB01961">
    <property type="generic name" value="Cytidine 3'-monophosphate"/>
</dbReference>
<dbReference type="DrugBank" id="DB03326">
    <property type="generic name" value="Deoxycytidylyl-3',5'-guanosine"/>
</dbReference>
<dbReference type="DrugBank" id="DB01942">
    <property type="generic name" value="Formic acid"/>
</dbReference>
<dbReference type="DrugBank" id="DB00536">
    <property type="generic name" value="Guanidine"/>
</dbReference>
<dbReference type="DrugBank" id="DB04464">
    <property type="generic name" value="N-Formylmethionine"/>
</dbReference>
<dbReference type="DrugBank" id="DB03726">
    <property type="generic name" value="Purine Riboside-5'-Monophosphate"/>
</dbReference>
<dbReference type="DrugBank" id="DB03900">
    <property type="generic name" value="tert-butanol"/>
</dbReference>
<dbReference type="DrugBank" id="DB03512">
    <property type="generic name" value="Uridine-2',3'-vanadate"/>
</dbReference>
<dbReference type="DrugBank" id="DB03447">
    <property type="generic name" value="Uridylyl-2'-5'-phospho-adenosine"/>
</dbReference>
<dbReference type="DrugBank" id="DB04514">
    <property type="generic name" value="Uridylyl-2'-5'-phospho-guanosine"/>
</dbReference>
<dbReference type="GlyConnect" id="1973">
    <property type="glycosylation" value="3 N-Linked glycans (2 sites)"/>
</dbReference>
<dbReference type="GlyCosmos" id="P07998">
    <property type="glycosylation" value="3 sites, 3 glycans"/>
</dbReference>
<dbReference type="GlyGen" id="P07998">
    <property type="glycosylation" value="3 sites, 3 N-linked glycans (2 sites)"/>
</dbReference>
<dbReference type="iPTMnet" id="P07998"/>
<dbReference type="PhosphoSitePlus" id="P07998"/>
<dbReference type="BioMuta" id="RNASE1"/>
<dbReference type="DMDM" id="1350818"/>
<dbReference type="jPOST" id="P07998"/>
<dbReference type="MassIVE" id="P07998"/>
<dbReference type="PaxDb" id="9606-ENSP00000381057"/>
<dbReference type="PeptideAtlas" id="P07998"/>
<dbReference type="PRIDE" id="P07998"/>
<dbReference type="ProteomicsDB" id="52059"/>
<dbReference type="Antibodypedia" id="18">
    <property type="antibodies" value="284 antibodies from 25 providers"/>
</dbReference>
<dbReference type="DNASU" id="6035"/>
<dbReference type="Ensembl" id="ENST00000340900.3">
    <property type="protein sequence ID" value="ENSP00000344193.3"/>
    <property type="gene ID" value="ENSG00000129538.14"/>
</dbReference>
<dbReference type="Ensembl" id="ENST00000397967.5">
    <property type="protein sequence ID" value="ENSP00000381057.4"/>
    <property type="gene ID" value="ENSG00000129538.14"/>
</dbReference>
<dbReference type="Ensembl" id="ENST00000397970.4">
    <property type="protein sequence ID" value="ENSP00000381060.4"/>
    <property type="gene ID" value="ENSG00000129538.14"/>
</dbReference>
<dbReference type="Ensembl" id="ENST00000412779.2">
    <property type="protein sequence ID" value="ENSP00000399493.2"/>
    <property type="gene ID" value="ENSG00000129538.14"/>
</dbReference>
<dbReference type="GeneID" id="6035"/>
<dbReference type="KEGG" id="hsa:6035"/>
<dbReference type="MANE-Select" id="ENST00000397967.5">
    <property type="protein sequence ID" value="ENSP00000381057.4"/>
    <property type="RefSeq nucleotide sequence ID" value="NM_002933.5"/>
    <property type="RefSeq protein sequence ID" value="NP_002924.1"/>
</dbReference>
<dbReference type="AGR" id="HGNC:10044"/>
<dbReference type="CTD" id="6035"/>
<dbReference type="DisGeNET" id="6035"/>
<dbReference type="GeneCards" id="RNASE1"/>
<dbReference type="HGNC" id="HGNC:10044">
    <property type="gene designation" value="RNASE1"/>
</dbReference>
<dbReference type="HPA" id="ENSG00000129538">
    <property type="expression patterns" value="Tissue enriched (pancreas)"/>
</dbReference>
<dbReference type="MIM" id="180440">
    <property type="type" value="gene"/>
</dbReference>
<dbReference type="neXtProt" id="NX_P07998"/>
<dbReference type="OpenTargets" id="ENSG00000129538"/>
<dbReference type="PharmGKB" id="PA34412"/>
<dbReference type="VEuPathDB" id="HostDB:ENSG00000129538"/>
<dbReference type="eggNOG" id="ENOG502SQ4K">
    <property type="taxonomic scope" value="Eukaryota"/>
</dbReference>
<dbReference type="GeneTree" id="ENSGT00940000160869"/>
<dbReference type="HOGENOM" id="CLU_117006_0_0_1"/>
<dbReference type="InParanoid" id="P07998"/>
<dbReference type="OMA" id="CVQPSLG"/>
<dbReference type="OrthoDB" id="8573660at2759"/>
<dbReference type="PAN-GO" id="P07998">
    <property type="GO annotations" value="3 GO annotations based on evolutionary models"/>
</dbReference>
<dbReference type="PhylomeDB" id="P07998"/>
<dbReference type="TreeFam" id="TF333393"/>
<dbReference type="BRENDA" id="4.6.1.18">
    <property type="organism ID" value="2681"/>
</dbReference>
<dbReference type="PathwayCommons" id="P07998"/>
<dbReference type="Reactome" id="R-HSA-9613829">
    <property type="pathway name" value="Chaperone Mediated Autophagy"/>
</dbReference>
<dbReference type="Reactome" id="R-HSA-9615710">
    <property type="pathway name" value="Late endosomal microautophagy"/>
</dbReference>
<dbReference type="Reactome" id="R-HSA-9925561">
    <property type="pathway name" value="Developmental Lineage of Pancreatic Acinar Cells"/>
</dbReference>
<dbReference type="SignaLink" id="P07998"/>
<dbReference type="BioGRID-ORCS" id="6035">
    <property type="hits" value="17 hits in 1151 CRISPR screens"/>
</dbReference>
<dbReference type="ChiTaRS" id="RNASE1">
    <property type="organism name" value="human"/>
</dbReference>
<dbReference type="EvolutionaryTrace" id="P07998"/>
<dbReference type="GeneWiki" id="RNASE1"/>
<dbReference type="GenomeRNAi" id="6035"/>
<dbReference type="Pharos" id="P07998">
    <property type="development level" value="Tchem"/>
</dbReference>
<dbReference type="PRO" id="PR:P07998"/>
<dbReference type="Proteomes" id="UP000005640">
    <property type="component" value="Chromosome 14"/>
</dbReference>
<dbReference type="RNAct" id="P07998">
    <property type="molecule type" value="protein"/>
</dbReference>
<dbReference type="Bgee" id="ENSG00000129538">
    <property type="expression patterns" value="Expressed in right testis and 203 other cell types or tissues"/>
</dbReference>
<dbReference type="ExpressionAtlas" id="P07998">
    <property type="expression patterns" value="baseline and differential"/>
</dbReference>
<dbReference type="GO" id="GO:0070062">
    <property type="term" value="C:extracellular exosome"/>
    <property type="evidence" value="ECO:0007005"/>
    <property type="project" value="UniProtKB"/>
</dbReference>
<dbReference type="GO" id="GO:0016829">
    <property type="term" value="F:lyase activity"/>
    <property type="evidence" value="ECO:0007669"/>
    <property type="project" value="UniProtKB-KW"/>
</dbReference>
<dbReference type="GO" id="GO:0003676">
    <property type="term" value="F:nucleic acid binding"/>
    <property type="evidence" value="ECO:0007669"/>
    <property type="project" value="InterPro"/>
</dbReference>
<dbReference type="GO" id="GO:0004522">
    <property type="term" value="F:ribonuclease A activity"/>
    <property type="evidence" value="ECO:0000304"/>
    <property type="project" value="ProtInc"/>
</dbReference>
<dbReference type="GO" id="GO:0004540">
    <property type="term" value="F:RNA nuclease activity"/>
    <property type="evidence" value="ECO:0000314"/>
    <property type="project" value="UniProtKB"/>
</dbReference>
<dbReference type="GO" id="GO:0050830">
    <property type="term" value="P:defense response to Gram-positive bacterium"/>
    <property type="evidence" value="ECO:0000318"/>
    <property type="project" value="GO_Central"/>
</dbReference>
<dbReference type="CDD" id="cd06265">
    <property type="entry name" value="RNase_A_canonical"/>
    <property type="match status" value="1"/>
</dbReference>
<dbReference type="FunFam" id="3.10.130.10:FF:000001">
    <property type="entry name" value="Ribonuclease pancreatic"/>
    <property type="match status" value="1"/>
</dbReference>
<dbReference type="Gene3D" id="3.10.130.10">
    <property type="entry name" value="Ribonuclease A-like domain"/>
    <property type="match status" value="1"/>
</dbReference>
<dbReference type="InterPro" id="IPR001427">
    <property type="entry name" value="RNaseA"/>
</dbReference>
<dbReference type="InterPro" id="IPR036816">
    <property type="entry name" value="RNaseA-like_dom_sf"/>
</dbReference>
<dbReference type="InterPro" id="IPR023411">
    <property type="entry name" value="RNaseA_AS"/>
</dbReference>
<dbReference type="InterPro" id="IPR023412">
    <property type="entry name" value="RNaseA_domain"/>
</dbReference>
<dbReference type="PANTHER" id="PTHR11437">
    <property type="entry name" value="RIBONUCLEASE"/>
    <property type="match status" value="1"/>
</dbReference>
<dbReference type="PANTHER" id="PTHR11437:SF24">
    <property type="entry name" value="RIBONUCLEASE PANCREATIC"/>
    <property type="match status" value="1"/>
</dbReference>
<dbReference type="Pfam" id="PF00074">
    <property type="entry name" value="RnaseA"/>
    <property type="match status" value="1"/>
</dbReference>
<dbReference type="PRINTS" id="PR00794">
    <property type="entry name" value="RIBONUCLEASE"/>
</dbReference>
<dbReference type="SMART" id="SM00092">
    <property type="entry name" value="RNAse_Pc"/>
    <property type="match status" value="1"/>
</dbReference>
<dbReference type="SUPFAM" id="SSF54076">
    <property type="entry name" value="RNase A-like"/>
    <property type="match status" value="1"/>
</dbReference>
<dbReference type="PROSITE" id="PS00127">
    <property type="entry name" value="RNASE_PANCREATIC"/>
    <property type="match status" value="1"/>
</dbReference>
<gene>
    <name type="primary">RNASE1</name>
    <name type="synonym">RIB1</name>
    <name type="synonym">RNS1</name>
</gene>
<name>RNAS1_HUMAN</name>